<organismHost>
    <name type="scientific">Felis catus</name>
    <name type="common">Cat</name>
    <name type="synonym">Felis silvestris catus</name>
    <dbReference type="NCBI Taxonomy" id="9685"/>
</organismHost>
<accession>P89063</accession>
<proteinExistence type="evidence at transcript level"/>
<name>NSP4_ROTF6</name>
<feature type="chain" id="PRO_0000369460" description="Non-structural glycoprotein 4">
    <location>
        <begin position="1"/>
        <end position="175"/>
    </location>
</feature>
<feature type="topological domain" description="Lumenal" evidence="1">
    <location>
        <begin position="1"/>
        <end position="28"/>
    </location>
</feature>
<feature type="transmembrane region" description="Helical; Signal-anchor for type III membrane protein" evidence="1">
    <location>
        <begin position="29"/>
        <end position="51"/>
    </location>
</feature>
<feature type="topological domain" description="Cytoplasmic" evidence="1">
    <location>
        <begin position="52"/>
        <end position="175"/>
    </location>
</feature>
<feature type="binding site" evidence="1">
    <location>
        <position position="120"/>
    </location>
    <ligand>
        <name>Ca(2+)</name>
        <dbReference type="ChEBI" id="CHEBI:29108"/>
    </ligand>
</feature>
<feature type="binding site" evidence="1">
    <location>
        <position position="123"/>
    </location>
    <ligand>
        <name>Ca(2+)</name>
        <dbReference type="ChEBI" id="CHEBI:29108"/>
    </ligand>
</feature>
<feature type="glycosylation site" description="N-linked (GlcNAc...) asparagine; by host" evidence="1">
    <location>
        <position position="8"/>
    </location>
</feature>
<feature type="glycosylation site" description="N-linked (GlcNAc...) asparagine; by host" evidence="1">
    <location>
        <position position="18"/>
    </location>
</feature>
<dbReference type="EMBL" id="D88833">
    <property type="protein sequence ID" value="BAA13730.1"/>
    <property type="molecule type" value="mRNA"/>
</dbReference>
<dbReference type="GO" id="GO:0005576">
    <property type="term" value="C:extracellular region"/>
    <property type="evidence" value="ECO:0007669"/>
    <property type="project" value="UniProtKB-SubCell"/>
</dbReference>
<dbReference type="GO" id="GO:0044155">
    <property type="term" value="C:host caveola"/>
    <property type="evidence" value="ECO:0007669"/>
    <property type="project" value="UniProtKB-SubCell"/>
</dbReference>
<dbReference type="GO" id="GO:0044169">
    <property type="term" value="C:host cell rough endoplasmic reticulum membrane"/>
    <property type="evidence" value="ECO:0007669"/>
    <property type="project" value="UniProtKB-SubCell"/>
</dbReference>
<dbReference type="GO" id="GO:0016020">
    <property type="term" value="C:membrane"/>
    <property type="evidence" value="ECO:0007669"/>
    <property type="project" value="UniProtKB-UniRule"/>
</dbReference>
<dbReference type="GO" id="GO:0015267">
    <property type="term" value="F:channel activity"/>
    <property type="evidence" value="ECO:0007669"/>
    <property type="project" value="UniProtKB-KW"/>
</dbReference>
<dbReference type="GO" id="GO:0046872">
    <property type="term" value="F:metal ion binding"/>
    <property type="evidence" value="ECO:0007669"/>
    <property type="project" value="UniProtKB-UniRule"/>
</dbReference>
<dbReference type="GO" id="GO:0090729">
    <property type="term" value="F:toxin activity"/>
    <property type="evidence" value="ECO:0007669"/>
    <property type="project" value="UniProtKB-UniRule"/>
</dbReference>
<dbReference type="GO" id="GO:0034220">
    <property type="term" value="P:monoatomic ion transmembrane transport"/>
    <property type="evidence" value="ECO:0007669"/>
    <property type="project" value="UniProtKB-KW"/>
</dbReference>
<dbReference type="GO" id="GO:0039520">
    <property type="term" value="P:symbiont-mediated activation of host autophagy"/>
    <property type="evidence" value="ECO:0007669"/>
    <property type="project" value="UniProtKB-KW"/>
</dbReference>
<dbReference type="GO" id="GO:0016032">
    <property type="term" value="P:viral process"/>
    <property type="evidence" value="ECO:0007669"/>
    <property type="project" value="UniProtKB-UniRule"/>
</dbReference>
<dbReference type="Gene3D" id="1.20.5.430">
    <property type="match status" value="1"/>
</dbReference>
<dbReference type="HAMAP" id="MF_04091">
    <property type="entry name" value="ROTA_NSP4"/>
    <property type="match status" value="1"/>
</dbReference>
<dbReference type="InterPro" id="IPR002107">
    <property type="entry name" value="Rotavirus_NSP4"/>
</dbReference>
<dbReference type="Pfam" id="PF01452">
    <property type="entry name" value="Rota_NSP4"/>
    <property type="match status" value="1"/>
</dbReference>
<dbReference type="SUPFAM" id="SSF58030">
    <property type="entry name" value="Rotavirus nonstructural proteins"/>
    <property type="match status" value="1"/>
</dbReference>
<sequence>MEKLTDLNYTLSVITLMNDTLHTIMEDPGMAYFPYIASVLTVLFTLHKASLPTMKIALKTSRCSYKVIKYCIVSIFNTLLKLAGYKEQITTKDEIEKQMDRVVKEMRRQLEMIDKLTTREIEQVELLKRIYDMLIATSVDKIDTTQEFNQKHFKTLNEWAEGENPYKPREVTASL</sequence>
<reference key="1">
    <citation type="journal article" date="1997" name="J. Gen. Virol.">
        <title>Three major alleles of rotavirus NSP4 proteins identified by sequence analysis.</title>
        <authorList>
            <person name="Horie Y."/>
            <person name="Masamune O."/>
            <person name="Nakagomi O."/>
        </authorList>
    </citation>
    <scope>NUCLEOTIDE SEQUENCE [MRNA]</scope>
</reference>
<evidence type="ECO:0000255" key="1">
    <source>
        <dbReference type="HAMAP-Rule" id="MF_04091"/>
    </source>
</evidence>
<keyword id="KW-1072">Activation of host autophagy by virus</keyword>
<keyword id="KW-0106">Calcium</keyword>
<keyword id="KW-0260">Enterotoxin</keyword>
<keyword id="KW-0325">Glycoprotein</keyword>
<keyword id="KW-1038">Host endoplasmic reticulum</keyword>
<keyword id="KW-1043">Host membrane</keyword>
<keyword id="KW-0945">Host-virus interaction</keyword>
<keyword id="KW-0407">Ion channel</keyword>
<keyword id="KW-0406">Ion transport</keyword>
<keyword id="KW-0472">Membrane</keyword>
<keyword id="KW-0479">Metal-binding</keyword>
<keyword id="KW-0964">Secreted</keyword>
<keyword id="KW-0735">Signal-anchor</keyword>
<keyword id="KW-0800">Toxin</keyword>
<keyword id="KW-0812">Transmembrane</keyword>
<keyword id="KW-1133">Transmembrane helix</keyword>
<keyword id="KW-0813">Transport</keyword>
<keyword id="KW-1182">Viral ion channel</keyword>
<keyword id="KW-0843">Virulence</keyword>
<organism>
    <name type="scientific">Rotavirus A (isolate RVA/Cat/Japan/FRV64/1989/G3P5B[3])</name>
    <name type="common">RV-A</name>
    <dbReference type="NCBI Taxonomy" id="39010"/>
    <lineage>
        <taxon>Viruses</taxon>
        <taxon>Riboviria</taxon>
        <taxon>Orthornavirae</taxon>
        <taxon>Duplornaviricota</taxon>
        <taxon>Resentoviricetes</taxon>
        <taxon>Reovirales</taxon>
        <taxon>Sedoreoviridae</taxon>
        <taxon>Rotavirus</taxon>
        <taxon>Feline rotavirus</taxon>
    </lineage>
</organism>
<comment type="function">
    <text evidence="1">Plays an essential role in the virus replication cycle by acting as a viroporin. Creates a pore in the host endoplasmic reticulum and as a consequence releases Ca(2+) in the cytoplasm of infected cell. In turn, high levels of cytoplasmic calcium trigger membrane trafficking and transport of viral ER-associated proteins to viroplasms, sites of viral genome replication and immature particle assembly.</text>
</comment>
<comment type="function">
    <text evidence="1">The secreted form acts as an enterotoxin that causes phospholipase C-dependent elevation of the intracellular calcium concentration in host intestinal mucosa cells. Increased concentration of intracellular calcium disrupts the cytoskeleton and the tight junctions, raising the paracellular permeability. Potentiates chloride ion secretion through a calcium ion-dependent signaling pathway, inducing age-dependent diarrhea. To perform this enterotoxigenic role in vivo, NSP4 is released from infected enterocytes in a soluble form capable of diffusing within the intestinal lumen and interacting with host plasma membrane receptors on neighboring epithelial cells such as integrins ITGA1/ITGB1 and ITGA2/ITGB1.</text>
</comment>
<comment type="subunit">
    <text evidence="1">Homotetramer. Interacts with the immature particle in the viroplasm. Interacts with host CAV1, early and late in infection. Interacts with host integrin ITGA1/ITGB1 heterodimer. Interacts with host integrin ITGA2/ITGB1 heterodimer. Interaction with microtubules blocks trafficking to the Golgi apparatus.</text>
</comment>
<comment type="subcellular location">
    <subcellularLocation>
        <location evidence="1">Host rough endoplasmic reticulum membrane</location>
        <topology evidence="1">Single-pass type III membrane protein</topology>
    </subcellularLocation>
    <subcellularLocation>
        <location evidence="1">Host membrane</location>
        <location evidence="1">Host caveola</location>
        <topology evidence="1">Single-pass type III membrane protein</topology>
    </subcellularLocation>
    <subcellularLocation>
        <location evidence="1">Secreted</location>
    </subcellularLocation>
    <text evidence="1">NSP4 also localizes in vesicular structures which contain autophagosomal markers and associate with viroplasms in virus-infected cells. Additionally, a soluble form of glycosylated NSP4 is secreted despite retention of its transmembrane domain.</text>
</comment>
<comment type="domain">
    <text evidence="1">Binds 1 calcium ion per tetramer.</text>
</comment>
<comment type="PTM">
    <text evidence="1">The N-glycosyl content is primarily Man(9)GlcNAc, with a small amount of Man(8)GlcNAc.</text>
</comment>
<comment type="similarity">
    <text evidence="1">Belongs to the rotavirus NSP4 family.</text>
</comment>
<protein>
    <recommendedName>
        <fullName evidence="1">Non-structural glycoprotein 4</fullName>
        <shortName evidence="1">NSP4</shortName>
    </recommendedName>
    <alternativeName>
        <fullName evidence="1">NCVP5</fullName>
    </alternativeName>
    <alternativeName>
        <fullName evidence="1">NS28</fullName>
    </alternativeName>
</protein>